<reference key="1">
    <citation type="journal article" date="2011" name="J. Bacteriol.">
        <title>Comparative genomics of 28 Salmonella enterica isolates: evidence for CRISPR-mediated adaptive sublineage evolution.</title>
        <authorList>
            <person name="Fricke W.F."/>
            <person name="Mammel M.K."/>
            <person name="McDermott P.F."/>
            <person name="Tartera C."/>
            <person name="White D.G."/>
            <person name="Leclerc J.E."/>
            <person name="Ravel J."/>
            <person name="Cebula T.A."/>
        </authorList>
    </citation>
    <scope>NUCLEOTIDE SEQUENCE [LARGE SCALE GENOMIC DNA]</scope>
    <source>
        <strain>SL483</strain>
    </source>
</reference>
<sequence length="313" mass="34343">MTQWYPASPALWQGRDDSIEAPDARRLFQTVTRSETFSPENWQQKIALMGFACDEGVKRNAGRPGAAGAPDALRKALANMASHQGHERLVDLGNWVAPTPDLEGAQQALRDAVSRCLRAGMRTLVLGGGHETAFGHGAGVLDAFAQESVGIINLDAHLDLRQTDRATSGTPFRQLAQLCDAQSRAFHYACFGVSRAANTQALWREAQWRNVTVVEDLDCHDALAQMAQFIDKVDKIYLTIDLDVLPVWEMPAVSAPAALGVPLIQVLRLIEPVCRSGKLQAADLVEFNPRFDDDGAAARVAARLGWQIAHWWR</sequence>
<accession>B5F066</accession>
<name>HUTG_SALA4</name>
<gene>
    <name evidence="1" type="primary">hutG</name>
    <name type="ordered locus">SeAg_B0824</name>
</gene>
<proteinExistence type="inferred from homology"/>
<feature type="chain" id="PRO_1000133005" description="Formimidoylglutamase">
    <location>
        <begin position="1"/>
        <end position="313"/>
    </location>
</feature>
<feature type="binding site" evidence="1">
    <location>
        <position position="130"/>
    </location>
    <ligand>
        <name>Mn(2+)</name>
        <dbReference type="ChEBI" id="CHEBI:29035"/>
        <label>1</label>
    </ligand>
</feature>
<feature type="binding site" evidence="1">
    <location>
        <position position="155"/>
    </location>
    <ligand>
        <name>Mn(2+)</name>
        <dbReference type="ChEBI" id="CHEBI:29035"/>
        <label>1</label>
    </ligand>
</feature>
<feature type="binding site" evidence="1">
    <location>
        <position position="155"/>
    </location>
    <ligand>
        <name>Mn(2+)</name>
        <dbReference type="ChEBI" id="CHEBI:29035"/>
        <label>2</label>
    </ligand>
</feature>
<feature type="binding site" evidence="1">
    <location>
        <position position="157"/>
    </location>
    <ligand>
        <name>Mn(2+)</name>
        <dbReference type="ChEBI" id="CHEBI:29035"/>
        <label>2</label>
    </ligand>
</feature>
<feature type="binding site" evidence="1">
    <location>
        <position position="159"/>
    </location>
    <ligand>
        <name>Mn(2+)</name>
        <dbReference type="ChEBI" id="CHEBI:29035"/>
        <label>1</label>
    </ligand>
</feature>
<feature type="binding site" evidence="1">
    <location>
        <position position="241"/>
    </location>
    <ligand>
        <name>Mn(2+)</name>
        <dbReference type="ChEBI" id="CHEBI:29035"/>
        <label>1</label>
    </ligand>
</feature>
<feature type="binding site" evidence="1">
    <location>
        <position position="241"/>
    </location>
    <ligand>
        <name>Mn(2+)</name>
        <dbReference type="ChEBI" id="CHEBI:29035"/>
        <label>2</label>
    </ligand>
</feature>
<feature type="binding site" evidence="1">
    <location>
        <position position="243"/>
    </location>
    <ligand>
        <name>Mn(2+)</name>
        <dbReference type="ChEBI" id="CHEBI:29035"/>
        <label>2</label>
    </ligand>
</feature>
<evidence type="ECO:0000255" key="1">
    <source>
        <dbReference type="HAMAP-Rule" id="MF_00737"/>
    </source>
</evidence>
<dbReference type="EC" id="3.5.3.8" evidence="1"/>
<dbReference type="EMBL" id="CP001138">
    <property type="protein sequence ID" value="ACH50996.1"/>
    <property type="molecule type" value="Genomic_DNA"/>
</dbReference>
<dbReference type="RefSeq" id="WP_000195681.1">
    <property type="nucleotide sequence ID" value="NC_011149.1"/>
</dbReference>
<dbReference type="SMR" id="B5F066"/>
<dbReference type="KEGG" id="sea:SeAg_B0824"/>
<dbReference type="HOGENOM" id="CLU_039478_2_0_6"/>
<dbReference type="UniPathway" id="UPA00379">
    <property type="reaction ID" value="UER00552"/>
</dbReference>
<dbReference type="Proteomes" id="UP000008819">
    <property type="component" value="Chromosome"/>
</dbReference>
<dbReference type="GO" id="GO:0008783">
    <property type="term" value="F:agmatinase activity"/>
    <property type="evidence" value="ECO:0007669"/>
    <property type="project" value="TreeGrafter"/>
</dbReference>
<dbReference type="GO" id="GO:0050415">
    <property type="term" value="F:formimidoylglutamase activity"/>
    <property type="evidence" value="ECO:0007669"/>
    <property type="project" value="UniProtKB-UniRule"/>
</dbReference>
<dbReference type="GO" id="GO:0030145">
    <property type="term" value="F:manganese ion binding"/>
    <property type="evidence" value="ECO:0007669"/>
    <property type="project" value="UniProtKB-UniRule"/>
</dbReference>
<dbReference type="GO" id="GO:0019556">
    <property type="term" value="P:L-histidine catabolic process to glutamate and formamide"/>
    <property type="evidence" value="ECO:0007669"/>
    <property type="project" value="UniProtKB-UniPathway"/>
</dbReference>
<dbReference type="GO" id="GO:0019557">
    <property type="term" value="P:L-histidine catabolic process to glutamate and formate"/>
    <property type="evidence" value="ECO:0007669"/>
    <property type="project" value="UniProtKB-UniPathway"/>
</dbReference>
<dbReference type="GO" id="GO:0033389">
    <property type="term" value="P:putrescine biosynthetic process from arginine, via agmatine"/>
    <property type="evidence" value="ECO:0007669"/>
    <property type="project" value="TreeGrafter"/>
</dbReference>
<dbReference type="CDD" id="cd09988">
    <property type="entry name" value="Formimidoylglutamase"/>
    <property type="match status" value="1"/>
</dbReference>
<dbReference type="FunFam" id="3.40.800.10:FF:000010">
    <property type="entry name" value="Formimidoylglutamase"/>
    <property type="match status" value="1"/>
</dbReference>
<dbReference type="Gene3D" id="3.40.800.10">
    <property type="entry name" value="Ureohydrolase domain"/>
    <property type="match status" value="1"/>
</dbReference>
<dbReference type="HAMAP" id="MF_00737">
    <property type="entry name" value="Formimidoylglutam"/>
    <property type="match status" value="1"/>
</dbReference>
<dbReference type="InterPro" id="IPR005923">
    <property type="entry name" value="HutG"/>
</dbReference>
<dbReference type="InterPro" id="IPR006035">
    <property type="entry name" value="Ureohydrolase"/>
</dbReference>
<dbReference type="InterPro" id="IPR023696">
    <property type="entry name" value="Ureohydrolase_dom_sf"/>
</dbReference>
<dbReference type="NCBIfam" id="TIGR01227">
    <property type="entry name" value="hutG"/>
    <property type="match status" value="1"/>
</dbReference>
<dbReference type="PANTHER" id="PTHR11358">
    <property type="entry name" value="ARGINASE/AGMATINASE"/>
    <property type="match status" value="1"/>
</dbReference>
<dbReference type="PANTHER" id="PTHR11358:SF35">
    <property type="entry name" value="FORMIMIDOYLGLUTAMASE"/>
    <property type="match status" value="1"/>
</dbReference>
<dbReference type="Pfam" id="PF00491">
    <property type="entry name" value="Arginase"/>
    <property type="match status" value="1"/>
</dbReference>
<dbReference type="PIRSF" id="PIRSF036979">
    <property type="entry name" value="Arginase"/>
    <property type="match status" value="1"/>
</dbReference>
<dbReference type="SUPFAM" id="SSF52768">
    <property type="entry name" value="Arginase/deacetylase"/>
    <property type="match status" value="1"/>
</dbReference>
<dbReference type="PROSITE" id="PS51409">
    <property type="entry name" value="ARGINASE_2"/>
    <property type="match status" value="1"/>
</dbReference>
<organism>
    <name type="scientific">Salmonella agona (strain SL483)</name>
    <dbReference type="NCBI Taxonomy" id="454166"/>
    <lineage>
        <taxon>Bacteria</taxon>
        <taxon>Pseudomonadati</taxon>
        <taxon>Pseudomonadota</taxon>
        <taxon>Gammaproteobacteria</taxon>
        <taxon>Enterobacterales</taxon>
        <taxon>Enterobacteriaceae</taxon>
        <taxon>Salmonella</taxon>
    </lineage>
</organism>
<keyword id="KW-0369">Histidine metabolism</keyword>
<keyword id="KW-0378">Hydrolase</keyword>
<keyword id="KW-0464">Manganese</keyword>
<keyword id="KW-0479">Metal-binding</keyword>
<comment type="function">
    <text evidence="1">Catalyzes the conversion of N-formimidoyl-L-glutamate to L-glutamate and formamide.</text>
</comment>
<comment type="catalytic activity">
    <reaction evidence="1">
        <text>N-formimidoyl-L-glutamate + H2O = formamide + L-glutamate</text>
        <dbReference type="Rhea" id="RHEA:22492"/>
        <dbReference type="ChEBI" id="CHEBI:15377"/>
        <dbReference type="ChEBI" id="CHEBI:16397"/>
        <dbReference type="ChEBI" id="CHEBI:29985"/>
        <dbReference type="ChEBI" id="CHEBI:58928"/>
        <dbReference type="EC" id="3.5.3.8"/>
    </reaction>
</comment>
<comment type="cofactor">
    <cofactor evidence="1">
        <name>Mn(2+)</name>
        <dbReference type="ChEBI" id="CHEBI:29035"/>
    </cofactor>
    <text evidence="1">Binds 2 manganese ions per subunit.</text>
</comment>
<comment type="pathway">
    <text evidence="1">Amino-acid degradation; L-histidine degradation into L-glutamate; L-glutamate from N-formimidoyl-L-glutamate (hydrolase route): step 1/1.</text>
</comment>
<comment type="similarity">
    <text evidence="1">Belongs to the arginase family.</text>
</comment>
<protein>
    <recommendedName>
        <fullName evidence="1">Formimidoylglutamase</fullName>
        <ecNumber evidence="1">3.5.3.8</ecNumber>
    </recommendedName>
    <alternativeName>
        <fullName evidence="1">Formiminoglutamase</fullName>
    </alternativeName>
    <alternativeName>
        <fullName evidence="1">Formiminoglutamate hydrolase</fullName>
    </alternativeName>
</protein>